<feature type="chain" id="PRO_0000221679" description="DNA-binding protein">
    <location>
        <begin position="1"/>
        <end position="529"/>
    </location>
</feature>
<feature type="region of interest" description="Disordered" evidence="2">
    <location>
        <begin position="1"/>
        <end position="107"/>
    </location>
</feature>
<feature type="region of interest" description="Disordered" evidence="2">
    <location>
        <begin position="125"/>
        <end position="166"/>
    </location>
</feature>
<feature type="region of interest" description="Flexible loop" evidence="1">
    <location>
        <begin position="297"/>
        <end position="331"/>
    </location>
</feature>
<feature type="region of interest" description="C-terminal arm, DBP binding" evidence="1">
    <location>
        <begin position="513"/>
        <end position="529"/>
    </location>
</feature>
<feature type="compositionally biased region" description="Basic and acidic residues" evidence="2">
    <location>
        <begin position="1"/>
        <end position="17"/>
    </location>
</feature>
<feature type="compositionally biased region" description="Basic residues" evidence="2">
    <location>
        <begin position="129"/>
        <end position="139"/>
    </location>
</feature>
<feature type="compositionally biased region" description="Acidic residues" evidence="2">
    <location>
        <begin position="155"/>
        <end position="165"/>
    </location>
</feature>
<feature type="binding site" evidence="1 5 6 7 8 9">
    <location>
        <position position="284"/>
    </location>
    <ligand>
        <name>Zn(2+)</name>
        <dbReference type="ChEBI" id="CHEBI:29105"/>
        <label>1</label>
    </ligand>
</feature>
<feature type="binding site" evidence="1 5 6 7 8 9">
    <location>
        <position position="286"/>
    </location>
    <ligand>
        <name>Zn(2+)</name>
        <dbReference type="ChEBI" id="CHEBI:29105"/>
        <label>1</label>
    </ligand>
</feature>
<feature type="binding site" evidence="1 5 6 7 8 9">
    <location>
        <position position="339"/>
    </location>
    <ligand>
        <name>Zn(2+)</name>
        <dbReference type="ChEBI" id="CHEBI:29105"/>
        <label>1</label>
    </ligand>
</feature>
<feature type="binding site" evidence="1 5 6 7 8 9">
    <location>
        <position position="355"/>
    </location>
    <ligand>
        <name>Zn(2+)</name>
        <dbReference type="ChEBI" id="CHEBI:29105"/>
        <label>1</label>
    </ligand>
</feature>
<feature type="binding site" evidence="1 5 6 7 8 9">
    <location>
        <position position="396"/>
    </location>
    <ligand>
        <name>Zn(2+)</name>
        <dbReference type="ChEBI" id="CHEBI:29105"/>
        <label>2</label>
    </ligand>
</feature>
<feature type="binding site" evidence="1 5 6 7 8 9">
    <location>
        <position position="398"/>
    </location>
    <ligand>
        <name>Zn(2+)</name>
        <dbReference type="ChEBI" id="CHEBI:29105"/>
        <label>2</label>
    </ligand>
</feature>
<feature type="binding site" evidence="1 5 6 7 8 9">
    <location>
        <position position="450"/>
    </location>
    <ligand>
        <name>Zn(2+)</name>
        <dbReference type="ChEBI" id="CHEBI:29105"/>
        <label>2</label>
    </ligand>
</feature>
<feature type="binding site" evidence="1 5 6 7 8 9">
    <location>
        <position position="467"/>
    </location>
    <ligand>
        <name>Zn(2+)</name>
        <dbReference type="ChEBI" id="CHEBI:29105"/>
        <label>2</label>
    </ligand>
</feature>
<feature type="modified residue" description="Phosphotyrosine; by host" evidence="1">
    <location>
        <position position="195"/>
    </location>
</feature>
<feature type="helix" evidence="12">
    <location>
        <begin position="180"/>
        <end position="194"/>
    </location>
</feature>
<feature type="helix" evidence="12">
    <location>
        <begin position="199"/>
        <end position="204"/>
    </location>
</feature>
<feature type="helix" evidence="12">
    <location>
        <begin position="213"/>
        <end position="226"/>
    </location>
</feature>
<feature type="helix" evidence="12">
    <location>
        <begin position="237"/>
        <end position="256"/>
    </location>
</feature>
<feature type="strand" evidence="12">
    <location>
        <begin position="268"/>
        <end position="272"/>
    </location>
</feature>
<feature type="strand" evidence="12">
    <location>
        <begin position="275"/>
        <end position="278"/>
    </location>
</feature>
<feature type="strand" evidence="12">
    <location>
        <begin position="287"/>
        <end position="289"/>
    </location>
</feature>
<feature type="strand" evidence="12">
    <location>
        <begin position="291"/>
        <end position="297"/>
    </location>
</feature>
<feature type="strand" evidence="12">
    <location>
        <begin position="331"/>
        <end position="338"/>
    </location>
</feature>
<feature type="helix" evidence="12">
    <location>
        <begin position="340"/>
        <end position="342"/>
    </location>
</feature>
<feature type="strand" evidence="11">
    <location>
        <begin position="343"/>
        <end position="346"/>
    </location>
</feature>
<feature type="strand" evidence="12">
    <location>
        <begin position="358"/>
        <end position="360"/>
    </location>
</feature>
<feature type="helix" evidence="12">
    <location>
        <begin position="362"/>
        <end position="379"/>
    </location>
</feature>
<feature type="strand" evidence="12">
    <location>
        <begin position="389"/>
        <end position="394"/>
    </location>
</feature>
<feature type="helix" evidence="10">
    <location>
        <begin position="397"/>
        <end position="399"/>
    </location>
</feature>
<feature type="strand" evidence="11">
    <location>
        <begin position="401"/>
        <end position="403"/>
    </location>
</feature>
<feature type="strand" evidence="12">
    <location>
        <begin position="415"/>
        <end position="419"/>
    </location>
</feature>
<feature type="turn" evidence="12">
    <location>
        <begin position="421"/>
        <end position="424"/>
    </location>
</feature>
<feature type="helix" evidence="12">
    <location>
        <begin position="428"/>
        <end position="430"/>
    </location>
</feature>
<feature type="helix" evidence="12">
    <location>
        <begin position="434"/>
        <end position="441"/>
    </location>
</feature>
<feature type="strand" evidence="12">
    <location>
        <begin position="444"/>
        <end position="449"/>
    </location>
</feature>
<feature type="strand" evidence="12">
    <location>
        <begin position="470"/>
        <end position="472"/>
    </location>
</feature>
<feature type="helix" evidence="12">
    <location>
        <begin position="473"/>
        <end position="488"/>
    </location>
</feature>
<feature type="strand" evidence="11">
    <location>
        <begin position="491"/>
        <end position="493"/>
    </location>
</feature>
<feature type="helix" evidence="12">
    <location>
        <begin position="506"/>
        <end position="508"/>
    </location>
</feature>
<feature type="strand" evidence="12">
    <location>
        <begin position="524"/>
        <end position="526"/>
    </location>
</feature>
<sequence length="529" mass="59139">MASREEEQRETTPERGRGAARRPPTMEDVSSPSPSPPPPRAPPKKRMRRRIESEDEEDSSQDALVPRTPSPRPSTSAADLAIAPKKKKKRPSPKPERPPSPEVIVDSEEEREDVALQMVGFSNPPVLIKHGKGGKRTVRRLNEDDPVARGMRTQEEEEEPSEAESEITVMNPLSVPIVSAWEKGMEAARALMDKYHVDNDLKANFKLLPDQVEALAAVCKTWLNEEHRGLQLTFTSKKTFVTMMGRFLQAYLQSFAEVTYKHHEPTGCALWLHRCAEIEGELKCLHGSIMINKEHVIEMDVTSENGQRALKEQSSKAKIVKNRWGRNVVQISNTDARCCVHDAACPANQFSGKSCGMFFSEGAKAQVAFKQIKAFMQALYPNAQTGHGHLLMPLRCECNSKPGHAPFLGRQLPKLTPFALSNAEDLDADLISDKSVLASVHHPALIVFQCCNPVYRNSRAQGGGPNCDFKISAPDLLNALVMVRSLWSENFTELPRMVVPEFKWSTKHQYRNVSLPVAHSDARQNPFDF</sequence>
<organism>
    <name type="scientific">Human adenovirus C serotype 5</name>
    <name type="common">HAdV-5</name>
    <name type="synonym">Human adenovirus 5</name>
    <dbReference type="NCBI Taxonomy" id="28285"/>
    <lineage>
        <taxon>Viruses</taxon>
        <taxon>Varidnaviria</taxon>
        <taxon>Bamfordvirae</taxon>
        <taxon>Preplasmiviricota</taxon>
        <taxon>Tectiliviricetes</taxon>
        <taxon>Rowavirales</taxon>
        <taxon>Adenoviridae</taxon>
        <taxon>Mastadenovirus</taxon>
        <taxon>Human mastadenovirus C</taxon>
    </lineage>
</organism>
<comment type="function">
    <text evidence="1 3 4">Plays a role in the elongation phase of viral strand displacement replication by unwinding the template in an ATP-independent fashion, employing its capacity to form multimers. Also enhances the rate of initiation. Released from template upon second strand synthesis. Assembles in complex with viral pTP, viral pol, host NFIA and host POU2F1/OCT1 on viral origin of replication. Covers the whole ssDNA genome during synthesis. The complementary strand synthesis induces its relese from DNA template. May inhibit cellular transcription mediated by the interaction between host SRCAP and CBP.</text>
</comment>
<comment type="subunit">
    <text evidence="1">Homomultimerizes on viral ssDNA bound to pTP. Forms a initiation complex with viral polymerase, pTP and hosts NFIA and POU2F1/OCT1. Interacts with host SRCAP.</text>
</comment>
<comment type="subcellular location">
    <subcellularLocation>
        <location evidence="1">Host nucleus</location>
    </subcellularLocation>
    <text evidence="1">Accumulates in infected cells.</text>
</comment>
<comment type="domain">
    <text evidence="1">The C-terminal arm bridges DBP molecules together, thereby creating a chain.</text>
</comment>
<comment type="similarity">
    <text evidence="1">Belongs to the adenoviridae E2A DNA-binding protein family.</text>
</comment>
<organismHost>
    <name type="scientific">Homo sapiens</name>
    <name type="common">Human</name>
    <dbReference type="NCBI Taxonomy" id="9606"/>
</organismHost>
<reference key="1">
    <citation type="journal article" date="1981" name="Nucleic Acids Res.">
        <title>Structure and organization of the gene coding for the DNA binding protein of adenovirus type 5.</title>
        <authorList>
            <person name="Kruijer W."/>
            <person name="van Schaik F.M.A."/>
            <person name="Sussenbach J.S."/>
        </authorList>
    </citation>
    <scope>NUCLEOTIDE SEQUENCE [GENOMIC DNA]</scope>
</reference>
<reference key="2">
    <citation type="journal article" date="1992" name="Virology">
        <title>The sequence of the genome of adenovirus type 5 and its comparison with the genome of adenovirus type 2.</title>
        <authorList>
            <person name="Chroboczek J."/>
            <person name="Bieber F."/>
            <person name="Jacrot B."/>
        </authorList>
    </citation>
    <scope>NUCLEOTIDE SEQUENCE [LARGE SCALE GENOMIC DNA]</scope>
</reference>
<reference key="3">
    <citation type="journal article" date="2003" name="J. Virol.">
        <title>Adenovirus type 5 DNA binding protein stimulates binding of DNA polymerase to the replication origin.</title>
        <authorList>
            <person name="van Breukelen B."/>
            <person name="Brenkman A.B."/>
            <person name="Holthuizen P.E."/>
            <person name="van der Vliet P.C."/>
        </authorList>
    </citation>
    <scope>FUNCTION</scope>
</reference>
<reference key="4">
    <citation type="journal article" date="2003" name="Curr. Top. Microbiol. Immunol.">
        <title>Adenovirus DNA replication.</title>
        <authorList>
            <person name="Liu H."/>
            <person name="Naismith J.H."/>
            <person name="Hay R.T."/>
        </authorList>
    </citation>
    <scope>FUNCTION</scope>
    <scope>IDENTIFICATION IN THE INITIATION COMPLEX</scope>
</reference>
<reference key="5">
    <citation type="journal article" date="1994" name="EMBO J.">
        <title>Crystal structure of the adenovirus DNA binding protein reveals a hook-on model for cooperative DNA binding.</title>
        <authorList>
            <person name="Tucker P.A."/>
            <person name="Tsernoglou D."/>
            <person name="Tucker A.D."/>
            <person name="Coenjaerts F.E.J."/>
            <person name="Leenders H."/>
            <person name="van der Vliet P.C."/>
        </authorList>
    </citation>
    <scope>X-RAY CRYSTALLOGRAPHY (2.6 ANGSTROMS) OF 176-529</scope>
</reference>
<reference evidence="7" key="6">
    <citation type="journal article" date="1996" name="Acta Crystallogr. D">
        <title>Conformational change of the adenovirus DNA-binding protein induced by soaking crystals with K3UO2F5 solutions.</title>
        <authorList>
            <person name="Kanellopoulos P.N."/>
            <person name="Tsernoglou D."/>
            <person name="van der Vliet P.C."/>
            <person name="Tucker P.A."/>
        </authorList>
    </citation>
    <scope>X-RAY CRYSTALLOGRAPHY (2.70 ANGSTROMS) OF 174-529 IN COMPLEX WITH ZINC</scope>
</reference>
<reference evidence="5 6" key="7">
    <citation type="journal article" date="1996" name="J. Mol. Biol.">
        <title>Alternative arrangements of the protein chain are possible for the adenovirus single-stranded DNA binding protein.</title>
        <authorList>
            <person name="Kanellopoulos P.N."/>
            <person name="Tsernoglou D."/>
            <person name="van der Vliet P.C."/>
            <person name="Tucker P.A."/>
        </authorList>
    </citation>
    <scope>X-RAY CRYSTALLOGRAPHY (3.00 ANGSTROMS) OF 174-529 IN COMPLEX WITH ZINC</scope>
</reference>
<evidence type="ECO:0000255" key="1">
    <source>
        <dbReference type="HAMAP-Rule" id="MF_04054"/>
    </source>
</evidence>
<evidence type="ECO:0000256" key="2">
    <source>
        <dbReference type="SAM" id="MobiDB-lite"/>
    </source>
</evidence>
<evidence type="ECO:0000269" key="3">
    <source>
    </source>
</evidence>
<evidence type="ECO:0000269" key="4">
    <source>
    </source>
</evidence>
<evidence type="ECO:0007744" key="5">
    <source>
        <dbReference type="PDB" id="1ADU"/>
    </source>
</evidence>
<evidence type="ECO:0007744" key="6">
    <source>
        <dbReference type="PDB" id="1ADV"/>
    </source>
</evidence>
<evidence type="ECO:0007744" key="7">
    <source>
        <dbReference type="PDB" id="1ANV"/>
    </source>
</evidence>
<evidence type="ECO:0007744" key="8">
    <source>
        <dbReference type="PDB" id="2WAZ"/>
    </source>
</evidence>
<evidence type="ECO:0007744" key="9">
    <source>
        <dbReference type="PDB" id="2WB0"/>
    </source>
</evidence>
<evidence type="ECO:0007829" key="10">
    <source>
        <dbReference type="PDB" id="1ADV"/>
    </source>
</evidence>
<evidence type="ECO:0007829" key="11">
    <source>
        <dbReference type="PDB" id="1ANV"/>
    </source>
</evidence>
<evidence type="ECO:0007829" key="12">
    <source>
        <dbReference type="PDB" id="2WB0"/>
    </source>
</evidence>
<name>DNB2_ADE05</name>
<accession>P03265</accession>
<protein>
    <recommendedName>
        <fullName evidence="1">DNA-binding protein</fullName>
        <shortName evidence="1">DBP</shortName>
    </recommendedName>
    <alternativeName>
        <fullName evidence="1">Early 2A protein</fullName>
    </alternativeName>
    <alternativeName>
        <fullName evidence="1">Early E2A DNA-binding protein</fullName>
    </alternativeName>
</protein>
<gene>
    <name evidence="1" type="primary">DBP</name>
</gene>
<proteinExistence type="evidence at protein level"/>
<dbReference type="EMBL" id="M73260">
    <property type="status" value="NOT_ANNOTATED_CDS"/>
    <property type="molecule type" value="Genomic_DNA"/>
</dbReference>
<dbReference type="EMBL" id="X02997">
    <property type="protein sequence ID" value="CAA26755.1"/>
    <property type="status" value="ALT_SEQ"/>
    <property type="molecule type" value="Genomic_DNA"/>
</dbReference>
<dbReference type="PIR" id="A03833">
    <property type="entry name" value="W7AD25"/>
</dbReference>
<dbReference type="RefSeq" id="AP_000213.1">
    <property type="nucleotide sequence ID" value="AC_000008.1"/>
</dbReference>
<dbReference type="PDB" id="1ADU">
    <property type="method" value="X-ray"/>
    <property type="resolution" value="3.00 A"/>
    <property type="chains" value="A/B=174-529"/>
</dbReference>
<dbReference type="PDB" id="1ADV">
    <property type="method" value="X-ray"/>
    <property type="resolution" value="3.20 A"/>
    <property type="chains" value="A/B=174-529"/>
</dbReference>
<dbReference type="PDB" id="1ANV">
    <property type="method" value="X-ray"/>
    <property type="resolution" value="2.70 A"/>
    <property type="chains" value="A=174-529"/>
</dbReference>
<dbReference type="PDB" id="2WAZ">
    <property type="method" value="X-ray"/>
    <property type="resolution" value="2.30 A"/>
    <property type="chains" value="X=174-529"/>
</dbReference>
<dbReference type="PDB" id="2WB0">
    <property type="method" value="X-ray"/>
    <property type="resolution" value="1.95 A"/>
    <property type="chains" value="X=174-529"/>
</dbReference>
<dbReference type="PDBsum" id="1ADU"/>
<dbReference type="PDBsum" id="1ADV"/>
<dbReference type="PDBsum" id="1ANV"/>
<dbReference type="PDBsum" id="2WAZ"/>
<dbReference type="PDBsum" id="2WB0"/>
<dbReference type="SMR" id="P03265"/>
<dbReference type="IntAct" id="P03265">
    <property type="interactions" value="5"/>
</dbReference>
<dbReference type="MINT" id="P03265"/>
<dbReference type="EvolutionaryTrace" id="P03265"/>
<dbReference type="Proteomes" id="UP000004992">
    <property type="component" value="Genome"/>
</dbReference>
<dbReference type="GO" id="GO:0042025">
    <property type="term" value="C:host cell nucleus"/>
    <property type="evidence" value="ECO:0000314"/>
    <property type="project" value="UniProtKB"/>
</dbReference>
<dbReference type="GO" id="GO:0019028">
    <property type="term" value="C:viral capsid"/>
    <property type="evidence" value="ECO:0000314"/>
    <property type="project" value="CACAO"/>
</dbReference>
<dbReference type="GO" id="GO:0003677">
    <property type="term" value="F:DNA binding"/>
    <property type="evidence" value="ECO:0000314"/>
    <property type="project" value="UniProtKB"/>
</dbReference>
<dbReference type="GO" id="GO:0042802">
    <property type="term" value="F:identical protein binding"/>
    <property type="evidence" value="ECO:0000314"/>
    <property type="project" value="CAFA"/>
</dbReference>
<dbReference type="GO" id="GO:0003697">
    <property type="term" value="F:single-stranded DNA binding"/>
    <property type="evidence" value="ECO:0000314"/>
    <property type="project" value="CAFA"/>
</dbReference>
<dbReference type="GO" id="GO:0008270">
    <property type="term" value="F:zinc ion binding"/>
    <property type="evidence" value="ECO:0000314"/>
    <property type="project" value="CAFA"/>
</dbReference>
<dbReference type="GO" id="GO:0006260">
    <property type="term" value="P:DNA replication"/>
    <property type="evidence" value="ECO:0007669"/>
    <property type="project" value="UniProtKB-KW"/>
</dbReference>
<dbReference type="GO" id="GO:0006351">
    <property type="term" value="P:DNA-templated transcription"/>
    <property type="evidence" value="ECO:0007669"/>
    <property type="project" value="UniProtKB-UniRule"/>
</dbReference>
<dbReference type="GO" id="GO:0045740">
    <property type="term" value="P:positive regulation of DNA replication"/>
    <property type="evidence" value="ECO:0000314"/>
    <property type="project" value="UniProtKB"/>
</dbReference>
<dbReference type="GO" id="GO:0039693">
    <property type="term" value="P:viral DNA genome replication"/>
    <property type="evidence" value="ECO:0000314"/>
    <property type="project" value="UniProtKB"/>
</dbReference>
<dbReference type="GO" id="GO:0039687">
    <property type="term" value="P:viral DNA strand displacement replication"/>
    <property type="evidence" value="ECO:0000314"/>
    <property type="project" value="UniProtKB"/>
</dbReference>
<dbReference type="DisProt" id="DP00003"/>
<dbReference type="FunFam" id="1.10.269.10:FF:000001">
    <property type="entry name" value="DNA-binding protein"/>
    <property type="match status" value="1"/>
</dbReference>
<dbReference type="FunFam" id="3.90.148.10:FF:000002">
    <property type="entry name" value="DNA-binding protein"/>
    <property type="match status" value="1"/>
</dbReference>
<dbReference type="Gene3D" id="3.90.148.10">
    <property type="entry name" value="Adenovirus DNA-binding, C-terminal domain superfamily/Adenovirus DNA-binding, zinc binding domain"/>
    <property type="match status" value="2"/>
</dbReference>
<dbReference type="Gene3D" id="1.10.269.10">
    <property type="entry name" value="Adenovirus DNA-binding, N-terminal domain"/>
    <property type="match status" value="1"/>
</dbReference>
<dbReference type="HAMAP" id="MF_04054">
    <property type="entry name" value="ADV_DNB2"/>
    <property type="match status" value="1"/>
</dbReference>
<dbReference type="InterPro" id="IPR036367">
    <property type="entry name" value="Ad_DBP_C_sf"/>
</dbReference>
<dbReference type="InterPro" id="IPR036368">
    <property type="entry name" value="ADBP_zn-bd_sf"/>
</dbReference>
<dbReference type="InterPro" id="IPR003176">
    <property type="entry name" value="Adenovirus_DNA-bd_a"/>
</dbReference>
<dbReference type="InterPro" id="IPR036362">
    <property type="entry name" value="Adenovirus_DNA-bd_N_sf"/>
</dbReference>
<dbReference type="InterPro" id="IPR005376">
    <property type="entry name" value="Adenovirus_DNA-bd_zn-bd"/>
</dbReference>
<dbReference type="InterPro" id="IPR037540">
    <property type="entry name" value="ADV_DNB2"/>
</dbReference>
<dbReference type="Pfam" id="PF02236">
    <property type="entry name" value="Viral_DNA_bi"/>
    <property type="match status" value="1"/>
</dbReference>
<dbReference type="Pfam" id="PF03728">
    <property type="entry name" value="Viral_DNA_Zn_bi"/>
    <property type="match status" value="2"/>
</dbReference>
<dbReference type="SUPFAM" id="SSF47724">
    <property type="entry name" value="Domain of early E2A DNA-binding protein, ADDBP"/>
    <property type="match status" value="1"/>
</dbReference>
<dbReference type="SUPFAM" id="SSF57917">
    <property type="entry name" value="Zn-binding domains of ADDBP"/>
    <property type="match status" value="2"/>
</dbReference>
<keyword id="KW-0002">3D-structure</keyword>
<keyword id="KW-0235">DNA replication</keyword>
<keyword id="KW-0238">DNA-binding</keyword>
<keyword id="KW-0244">Early protein</keyword>
<keyword id="KW-1048">Host nucleus</keyword>
<keyword id="KW-0945">Host-virus interaction</keyword>
<keyword id="KW-0479">Metal-binding</keyword>
<keyword id="KW-0597">Phosphoprotein</keyword>
<keyword id="KW-1185">Reference proteome</keyword>
<keyword id="KW-1194">Viral DNA replication</keyword>
<keyword id="KW-0862">Zinc</keyword>